<evidence type="ECO:0000255" key="1">
    <source>
        <dbReference type="HAMAP-Rule" id="MF_00121"/>
    </source>
</evidence>
<organism>
    <name type="scientific">Ureaplasma parvum serovar 3 (strain ATCC 27815 / 27 / NCTC 11736)</name>
    <dbReference type="NCBI Taxonomy" id="505682"/>
    <lineage>
        <taxon>Bacteria</taxon>
        <taxon>Bacillati</taxon>
        <taxon>Mycoplasmatota</taxon>
        <taxon>Mycoplasmoidales</taxon>
        <taxon>Mycoplasmoidaceae</taxon>
        <taxon>Ureaplasma</taxon>
    </lineage>
</organism>
<proteinExistence type="inferred from homology"/>
<accession>B1AJI4</accession>
<protein>
    <recommendedName>
        <fullName evidence="1">Aspartyl/glutamyl-tRNA(Asn/Gln) amidotransferase subunit B</fullName>
        <shortName evidence="1">Asp/Glu-ADT subunit B</shortName>
        <ecNumber evidence="1">6.3.5.-</ecNumber>
    </recommendedName>
</protein>
<keyword id="KW-0067">ATP-binding</keyword>
<keyword id="KW-0436">Ligase</keyword>
<keyword id="KW-0547">Nucleotide-binding</keyword>
<keyword id="KW-0648">Protein biosynthesis</keyword>
<feature type="chain" id="PRO_1000076173" description="Aspartyl/glutamyl-tRNA(Asn/Gln) amidotransferase subunit B">
    <location>
        <begin position="1"/>
        <end position="477"/>
    </location>
</feature>
<comment type="function">
    <text evidence="1">Allows the formation of correctly charged Asn-tRNA(Asn) or Gln-tRNA(Gln) through the transamidation of misacylated Asp-tRNA(Asn) or Glu-tRNA(Gln) in organisms which lack either or both of asparaginyl-tRNA or glutaminyl-tRNA synthetases. The reaction takes place in the presence of glutamine and ATP through an activated phospho-Asp-tRNA(Asn) or phospho-Glu-tRNA(Gln).</text>
</comment>
<comment type="catalytic activity">
    <reaction evidence="1">
        <text>L-glutamyl-tRNA(Gln) + L-glutamine + ATP + H2O = L-glutaminyl-tRNA(Gln) + L-glutamate + ADP + phosphate + H(+)</text>
        <dbReference type="Rhea" id="RHEA:17521"/>
        <dbReference type="Rhea" id="RHEA-COMP:9681"/>
        <dbReference type="Rhea" id="RHEA-COMP:9684"/>
        <dbReference type="ChEBI" id="CHEBI:15377"/>
        <dbReference type="ChEBI" id="CHEBI:15378"/>
        <dbReference type="ChEBI" id="CHEBI:29985"/>
        <dbReference type="ChEBI" id="CHEBI:30616"/>
        <dbReference type="ChEBI" id="CHEBI:43474"/>
        <dbReference type="ChEBI" id="CHEBI:58359"/>
        <dbReference type="ChEBI" id="CHEBI:78520"/>
        <dbReference type="ChEBI" id="CHEBI:78521"/>
        <dbReference type="ChEBI" id="CHEBI:456216"/>
    </reaction>
</comment>
<comment type="catalytic activity">
    <reaction evidence="1">
        <text>L-aspartyl-tRNA(Asn) + L-glutamine + ATP + H2O = L-asparaginyl-tRNA(Asn) + L-glutamate + ADP + phosphate + 2 H(+)</text>
        <dbReference type="Rhea" id="RHEA:14513"/>
        <dbReference type="Rhea" id="RHEA-COMP:9674"/>
        <dbReference type="Rhea" id="RHEA-COMP:9677"/>
        <dbReference type="ChEBI" id="CHEBI:15377"/>
        <dbReference type="ChEBI" id="CHEBI:15378"/>
        <dbReference type="ChEBI" id="CHEBI:29985"/>
        <dbReference type="ChEBI" id="CHEBI:30616"/>
        <dbReference type="ChEBI" id="CHEBI:43474"/>
        <dbReference type="ChEBI" id="CHEBI:58359"/>
        <dbReference type="ChEBI" id="CHEBI:78515"/>
        <dbReference type="ChEBI" id="CHEBI:78516"/>
        <dbReference type="ChEBI" id="CHEBI:456216"/>
    </reaction>
</comment>
<comment type="subunit">
    <text evidence="1">Heterotrimer of A, B and C subunits.</text>
</comment>
<comment type="similarity">
    <text evidence="1">Belongs to the GatB/GatE family. GatB subfamily.</text>
</comment>
<gene>
    <name evidence="1" type="primary">gatB</name>
    <name type="ordered locus">UPA3_0581</name>
</gene>
<dbReference type="EC" id="6.3.5.-" evidence="1"/>
<dbReference type="EMBL" id="CP000942">
    <property type="protein sequence ID" value="ACA32687.1"/>
    <property type="molecule type" value="Genomic_DNA"/>
</dbReference>
<dbReference type="RefSeq" id="WP_010891814.1">
    <property type="nucleotide sequence ID" value="NC_010503.1"/>
</dbReference>
<dbReference type="SMR" id="B1AJI4"/>
<dbReference type="GeneID" id="29672464"/>
<dbReference type="KEGG" id="upa:UPA3_0581"/>
<dbReference type="HOGENOM" id="CLU_019240_0_0_14"/>
<dbReference type="Proteomes" id="UP000002162">
    <property type="component" value="Chromosome"/>
</dbReference>
<dbReference type="GO" id="GO:0050566">
    <property type="term" value="F:asparaginyl-tRNA synthase (glutamine-hydrolyzing) activity"/>
    <property type="evidence" value="ECO:0007669"/>
    <property type="project" value="RHEA"/>
</dbReference>
<dbReference type="GO" id="GO:0005524">
    <property type="term" value="F:ATP binding"/>
    <property type="evidence" value="ECO:0007669"/>
    <property type="project" value="UniProtKB-KW"/>
</dbReference>
<dbReference type="GO" id="GO:0050567">
    <property type="term" value="F:glutaminyl-tRNA synthase (glutamine-hydrolyzing) activity"/>
    <property type="evidence" value="ECO:0007669"/>
    <property type="project" value="UniProtKB-UniRule"/>
</dbReference>
<dbReference type="GO" id="GO:0070681">
    <property type="term" value="P:glutaminyl-tRNAGln biosynthesis via transamidation"/>
    <property type="evidence" value="ECO:0007669"/>
    <property type="project" value="TreeGrafter"/>
</dbReference>
<dbReference type="GO" id="GO:0006412">
    <property type="term" value="P:translation"/>
    <property type="evidence" value="ECO:0007669"/>
    <property type="project" value="UniProtKB-UniRule"/>
</dbReference>
<dbReference type="Gene3D" id="1.10.10.410">
    <property type="match status" value="1"/>
</dbReference>
<dbReference type="HAMAP" id="MF_00121">
    <property type="entry name" value="GatB"/>
    <property type="match status" value="1"/>
</dbReference>
<dbReference type="InterPro" id="IPR017959">
    <property type="entry name" value="Asn/Gln-tRNA_amidoTrfase_suB/E"/>
</dbReference>
<dbReference type="InterPro" id="IPR006075">
    <property type="entry name" value="Asn/Gln-tRNA_Trfase_suB/E_cat"/>
</dbReference>
<dbReference type="InterPro" id="IPR018027">
    <property type="entry name" value="Asn/Gln_amidotransferase"/>
</dbReference>
<dbReference type="InterPro" id="IPR003789">
    <property type="entry name" value="Asn/Gln_tRNA_amidoTrase-B-like"/>
</dbReference>
<dbReference type="InterPro" id="IPR004413">
    <property type="entry name" value="GatB"/>
</dbReference>
<dbReference type="InterPro" id="IPR023168">
    <property type="entry name" value="GatB_Yqey_C_2"/>
</dbReference>
<dbReference type="InterPro" id="IPR017958">
    <property type="entry name" value="Gln-tRNA_amidoTrfase_suB_CS"/>
</dbReference>
<dbReference type="InterPro" id="IPR014746">
    <property type="entry name" value="Gln_synth/guanido_kin_cat_dom"/>
</dbReference>
<dbReference type="NCBIfam" id="TIGR00133">
    <property type="entry name" value="gatB"/>
    <property type="match status" value="1"/>
</dbReference>
<dbReference type="NCBIfam" id="NF004012">
    <property type="entry name" value="PRK05477.1-2"/>
    <property type="match status" value="1"/>
</dbReference>
<dbReference type="NCBIfam" id="NF004014">
    <property type="entry name" value="PRK05477.1-4"/>
    <property type="match status" value="1"/>
</dbReference>
<dbReference type="PANTHER" id="PTHR11659">
    <property type="entry name" value="GLUTAMYL-TRNA GLN AMIDOTRANSFERASE SUBUNIT B MITOCHONDRIAL AND PROKARYOTIC PET112-RELATED"/>
    <property type="match status" value="1"/>
</dbReference>
<dbReference type="PANTHER" id="PTHR11659:SF0">
    <property type="entry name" value="GLUTAMYL-TRNA(GLN) AMIDOTRANSFERASE SUBUNIT B, MITOCHONDRIAL"/>
    <property type="match status" value="1"/>
</dbReference>
<dbReference type="Pfam" id="PF02934">
    <property type="entry name" value="GatB_N"/>
    <property type="match status" value="1"/>
</dbReference>
<dbReference type="Pfam" id="PF02637">
    <property type="entry name" value="GatB_Yqey"/>
    <property type="match status" value="1"/>
</dbReference>
<dbReference type="SMART" id="SM00845">
    <property type="entry name" value="GatB_Yqey"/>
    <property type="match status" value="1"/>
</dbReference>
<dbReference type="SUPFAM" id="SSF89095">
    <property type="entry name" value="GatB/YqeY motif"/>
    <property type="match status" value="1"/>
</dbReference>
<dbReference type="SUPFAM" id="SSF55931">
    <property type="entry name" value="Glutamine synthetase/guanido kinase"/>
    <property type="match status" value="1"/>
</dbReference>
<dbReference type="PROSITE" id="PS01234">
    <property type="entry name" value="GATB"/>
    <property type="match status" value="1"/>
</dbReference>
<reference key="1">
    <citation type="submission" date="2008-02" db="EMBL/GenBank/DDBJ databases">
        <title>Genome sequence of Ureaplasma parvum serovar 3.</title>
        <authorList>
            <person name="Methe B.A."/>
            <person name="Glass J."/>
            <person name="Waites K."/>
            <person name="Shrivastava S."/>
        </authorList>
    </citation>
    <scope>NUCLEOTIDE SEQUENCE [LARGE SCALE GENOMIC DNA]</scope>
    <source>
        <strain>ATCC 27815 / 27 / NCTC 11736</strain>
    </source>
</reference>
<sequence length="477" mass="55279">MQNFEVIIGIEVHTALNTKTKMFSNAATSHKSIPNTLINEIDLALPGTLPTVNQEVVHKGLFLANALHMRTNHQFIAFDRKHYYYLDLPKGYQITQNYFPIGQNGYIQIIDEYNNLKRIRIKQIHLEEDTAKQTNIGNQIYLDYNRAGWPLIEIVSEADLRSAQETVLFLEELRKILLFNDISDAKMEDGSLRVDVNVSIRPQGAKKFGTKVEIKNINSISNVAKAIDYEIRRQLNLILLNQNVEQQTRRFDDNTNTTVFMRSKNDAINYRYIREANIAPIHLSDDYVKKMFLTKSCSINDLRQQLAQKGLVSSAIEQLLSDGPLFKAFKYVDKIVNNPLSVYKWLCLEFIGLINKNTQNIEEITPELLQKIARMILLFDQTLINGKQTKIILEKIYLTNKDPQILIKELGFEQITNENEITKLWHQILAKNQEMLLQYNERPDRVEKFFMGEIMKLTKAQANPTISFNVLKKILQK</sequence>
<name>GATB_UREP2</name>